<feature type="chain" id="PRO_1000020232" description="1-deoxy-D-xylulose 5-phosphate reductoisomerase">
    <location>
        <begin position="1"/>
        <end position="398"/>
    </location>
</feature>
<feature type="binding site" evidence="1">
    <location>
        <position position="11"/>
    </location>
    <ligand>
        <name>NADPH</name>
        <dbReference type="ChEBI" id="CHEBI:57783"/>
    </ligand>
</feature>
<feature type="binding site" evidence="1">
    <location>
        <position position="12"/>
    </location>
    <ligand>
        <name>NADPH</name>
        <dbReference type="ChEBI" id="CHEBI:57783"/>
    </ligand>
</feature>
<feature type="binding site" evidence="1">
    <location>
        <position position="13"/>
    </location>
    <ligand>
        <name>NADPH</name>
        <dbReference type="ChEBI" id="CHEBI:57783"/>
    </ligand>
</feature>
<feature type="binding site" evidence="1">
    <location>
        <position position="14"/>
    </location>
    <ligand>
        <name>NADPH</name>
        <dbReference type="ChEBI" id="CHEBI:57783"/>
    </ligand>
</feature>
<feature type="binding site" evidence="1">
    <location>
        <position position="38"/>
    </location>
    <ligand>
        <name>NADPH</name>
        <dbReference type="ChEBI" id="CHEBI:57783"/>
    </ligand>
</feature>
<feature type="binding site" evidence="1">
    <location>
        <position position="39"/>
    </location>
    <ligand>
        <name>NADPH</name>
        <dbReference type="ChEBI" id="CHEBI:57783"/>
    </ligand>
</feature>
<feature type="binding site" evidence="1">
    <location>
        <position position="125"/>
    </location>
    <ligand>
        <name>NADPH</name>
        <dbReference type="ChEBI" id="CHEBI:57783"/>
    </ligand>
</feature>
<feature type="binding site" evidence="1">
    <location>
        <position position="126"/>
    </location>
    <ligand>
        <name>1-deoxy-D-xylulose 5-phosphate</name>
        <dbReference type="ChEBI" id="CHEBI:57792"/>
    </ligand>
</feature>
<feature type="binding site" evidence="1">
    <location>
        <position position="127"/>
    </location>
    <ligand>
        <name>NADPH</name>
        <dbReference type="ChEBI" id="CHEBI:57783"/>
    </ligand>
</feature>
<feature type="binding site" evidence="1">
    <location>
        <position position="151"/>
    </location>
    <ligand>
        <name>Mn(2+)</name>
        <dbReference type="ChEBI" id="CHEBI:29035"/>
    </ligand>
</feature>
<feature type="binding site" evidence="1">
    <location>
        <position position="152"/>
    </location>
    <ligand>
        <name>1-deoxy-D-xylulose 5-phosphate</name>
        <dbReference type="ChEBI" id="CHEBI:57792"/>
    </ligand>
</feature>
<feature type="binding site" evidence="1">
    <location>
        <position position="153"/>
    </location>
    <ligand>
        <name>1-deoxy-D-xylulose 5-phosphate</name>
        <dbReference type="ChEBI" id="CHEBI:57792"/>
    </ligand>
</feature>
<feature type="binding site" evidence="1">
    <location>
        <position position="153"/>
    </location>
    <ligand>
        <name>Mn(2+)</name>
        <dbReference type="ChEBI" id="CHEBI:29035"/>
    </ligand>
</feature>
<feature type="binding site" evidence="1">
    <location>
        <position position="179"/>
    </location>
    <ligand>
        <name>1-deoxy-D-xylulose 5-phosphate</name>
        <dbReference type="ChEBI" id="CHEBI:57792"/>
    </ligand>
</feature>
<feature type="binding site" evidence="1">
    <location>
        <position position="202"/>
    </location>
    <ligand>
        <name>1-deoxy-D-xylulose 5-phosphate</name>
        <dbReference type="ChEBI" id="CHEBI:57792"/>
    </ligand>
</feature>
<feature type="binding site" evidence="1">
    <location>
        <position position="208"/>
    </location>
    <ligand>
        <name>NADPH</name>
        <dbReference type="ChEBI" id="CHEBI:57783"/>
    </ligand>
</feature>
<feature type="binding site" evidence="1">
    <location>
        <position position="215"/>
    </location>
    <ligand>
        <name>1-deoxy-D-xylulose 5-phosphate</name>
        <dbReference type="ChEBI" id="CHEBI:57792"/>
    </ligand>
</feature>
<feature type="binding site" evidence="1">
    <location>
        <position position="220"/>
    </location>
    <ligand>
        <name>1-deoxy-D-xylulose 5-phosphate</name>
        <dbReference type="ChEBI" id="CHEBI:57792"/>
    </ligand>
</feature>
<feature type="binding site" evidence="1">
    <location>
        <position position="221"/>
    </location>
    <ligand>
        <name>1-deoxy-D-xylulose 5-phosphate</name>
        <dbReference type="ChEBI" id="CHEBI:57792"/>
    </ligand>
</feature>
<feature type="binding site" evidence="1">
    <location>
        <position position="224"/>
    </location>
    <ligand>
        <name>1-deoxy-D-xylulose 5-phosphate</name>
        <dbReference type="ChEBI" id="CHEBI:57792"/>
    </ligand>
</feature>
<feature type="binding site" evidence="1">
    <location>
        <position position="224"/>
    </location>
    <ligand>
        <name>Mn(2+)</name>
        <dbReference type="ChEBI" id="CHEBI:29035"/>
    </ligand>
</feature>
<dbReference type="EC" id="1.1.1.267" evidence="1"/>
<dbReference type="EMBL" id="CP000151">
    <property type="protein sequence ID" value="ABB08917.1"/>
    <property type="molecule type" value="Genomic_DNA"/>
</dbReference>
<dbReference type="RefSeq" id="WP_011352455.1">
    <property type="nucleotide sequence ID" value="NC_007510.1"/>
</dbReference>
<dbReference type="SMR" id="Q39F49"/>
<dbReference type="GeneID" id="45095199"/>
<dbReference type="KEGG" id="bur:Bcep18194_A5323"/>
<dbReference type="PATRIC" id="fig|482957.22.peg.2272"/>
<dbReference type="HOGENOM" id="CLU_035714_4_0_4"/>
<dbReference type="UniPathway" id="UPA00056">
    <property type="reaction ID" value="UER00092"/>
</dbReference>
<dbReference type="Proteomes" id="UP000002705">
    <property type="component" value="Chromosome 1"/>
</dbReference>
<dbReference type="GO" id="GO:0030604">
    <property type="term" value="F:1-deoxy-D-xylulose-5-phosphate reductoisomerase activity"/>
    <property type="evidence" value="ECO:0007669"/>
    <property type="project" value="UniProtKB-UniRule"/>
</dbReference>
<dbReference type="GO" id="GO:0030145">
    <property type="term" value="F:manganese ion binding"/>
    <property type="evidence" value="ECO:0007669"/>
    <property type="project" value="TreeGrafter"/>
</dbReference>
<dbReference type="GO" id="GO:0070402">
    <property type="term" value="F:NADPH binding"/>
    <property type="evidence" value="ECO:0007669"/>
    <property type="project" value="InterPro"/>
</dbReference>
<dbReference type="GO" id="GO:0051484">
    <property type="term" value="P:isopentenyl diphosphate biosynthetic process, methylerythritol 4-phosphate pathway involved in terpenoid biosynthetic process"/>
    <property type="evidence" value="ECO:0007669"/>
    <property type="project" value="TreeGrafter"/>
</dbReference>
<dbReference type="FunFam" id="1.10.1740.10:FF:000004">
    <property type="entry name" value="1-deoxy-D-xylulose 5-phosphate reductoisomerase"/>
    <property type="match status" value="1"/>
</dbReference>
<dbReference type="FunFam" id="3.40.50.720:FF:000045">
    <property type="entry name" value="1-deoxy-D-xylulose 5-phosphate reductoisomerase"/>
    <property type="match status" value="1"/>
</dbReference>
<dbReference type="Gene3D" id="1.10.1740.10">
    <property type="match status" value="1"/>
</dbReference>
<dbReference type="Gene3D" id="3.40.50.720">
    <property type="entry name" value="NAD(P)-binding Rossmann-like Domain"/>
    <property type="match status" value="1"/>
</dbReference>
<dbReference type="HAMAP" id="MF_00183">
    <property type="entry name" value="DXP_reductoisom"/>
    <property type="match status" value="1"/>
</dbReference>
<dbReference type="InterPro" id="IPR003821">
    <property type="entry name" value="DXP_reductoisomerase"/>
</dbReference>
<dbReference type="InterPro" id="IPR013644">
    <property type="entry name" value="DXP_reductoisomerase_C"/>
</dbReference>
<dbReference type="InterPro" id="IPR013512">
    <property type="entry name" value="DXP_reductoisomerase_N"/>
</dbReference>
<dbReference type="InterPro" id="IPR026877">
    <property type="entry name" value="DXPR_C"/>
</dbReference>
<dbReference type="InterPro" id="IPR036169">
    <property type="entry name" value="DXPR_C_sf"/>
</dbReference>
<dbReference type="InterPro" id="IPR036291">
    <property type="entry name" value="NAD(P)-bd_dom_sf"/>
</dbReference>
<dbReference type="NCBIfam" id="TIGR00243">
    <property type="entry name" value="Dxr"/>
    <property type="match status" value="1"/>
</dbReference>
<dbReference type="NCBIfam" id="NF003938">
    <property type="entry name" value="PRK05447.1-1"/>
    <property type="match status" value="1"/>
</dbReference>
<dbReference type="NCBIfam" id="NF009114">
    <property type="entry name" value="PRK12464.1"/>
    <property type="match status" value="1"/>
</dbReference>
<dbReference type="PANTHER" id="PTHR30525">
    <property type="entry name" value="1-DEOXY-D-XYLULOSE 5-PHOSPHATE REDUCTOISOMERASE"/>
    <property type="match status" value="1"/>
</dbReference>
<dbReference type="PANTHER" id="PTHR30525:SF0">
    <property type="entry name" value="1-DEOXY-D-XYLULOSE 5-PHOSPHATE REDUCTOISOMERASE, CHLOROPLASTIC"/>
    <property type="match status" value="1"/>
</dbReference>
<dbReference type="Pfam" id="PF08436">
    <property type="entry name" value="DXP_redisom_C"/>
    <property type="match status" value="1"/>
</dbReference>
<dbReference type="Pfam" id="PF02670">
    <property type="entry name" value="DXP_reductoisom"/>
    <property type="match status" value="1"/>
</dbReference>
<dbReference type="Pfam" id="PF13288">
    <property type="entry name" value="DXPR_C"/>
    <property type="match status" value="1"/>
</dbReference>
<dbReference type="PIRSF" id="PIRSF006205">
    <property type="entry name" value="Dxp_reductismrs"/>
    <property type="match status" value="1"/>
</dbReference>
<dbReference type="SUPFAM" id="SSF69055">
    <property type="entry name" value="1-deoxy-D-xylulose-5-phosphate reductoisomerase, C-terminal domain"/>
    <property type="match status" value="1"/>
</dbReference>
<dbReference type="SUPFAM" id="SSF55347">
    <property type="entry name" value="Glyceraldehyde-3-phosphate dehydrogenase-like, C-terminal domain"/>
    <property type="match status" value="1"/>
</dbReference>
<dbReference type="SUPFAM" id="SSF51735">
    <property type="entry name" value="NAD(P)-binding Rossmann-fold domains"/>
    <property type="match status" value="1"/>
</dbReference>
<organism>
    <name type="scientific">Burkholderia lata (strain ATCC 17760 / DSM 23089 / LMG 22485 / NCIMB 9086 / R18194 / 383)</name>
    <dbReference type="NCBI Taxonomy" id="482957"/>
    <lineage>
        <taxon>Bacteria</taxon>
        <taxon>Pseudomonadati</taxon>
        <taxon>Pseudomonadota</taxon>
        <taxon>Betaproteobacteria</taxon>
        <taxon>Burkholderiales</taxon>
        <taxon>Burkholderiaceae</taxon>
        <taxon>Burkholderia</taxon>
        <taxon>Burkholderia cepacia complex</taxon>
    </lineage>
</organism>
<sequence>MQKRLTLLGSTGSIGDSTLDVVARHPERFSVYALTAHRNGDKLVEQCLRFAPEVAVVGDAATAAHVDAKLRAAGSKTTVLHGPQALVDVSKSDGCDTVVAAIVGAAGMAPSLAAARAGKRILLANKEALVMSGAIFMDAVRDHGAILLPVDSEHNAIFQCMPRDAAEHGGISKIILTASGGPFRTREPATLVDVTPDEACKHPNWVMGRKISVDSATMMNKGLEVIEAHWIFGLPGDRIDVLIHPQSVIHSLVSYRDGSVLAQLGNPDMRTPIAYALAFPERVDAGVDQLDLAQIAQLSFEKPDYARFPCLALALKALEEGGIASAALNAANEVAVEAFLERRIGFMAIAATVDAVLNTLPNRTPDGLEDVLAADAEARRLAAEIIAKAPAPRVERTV</sequence>
<gene>
    <name evidence="1" type="primary">dxr</name>
    <name type="ordered locus">Bcep18194_A5323</name>
</gene>
<protein>
    <recommendedName>
        <fullName evidence="1">1-deoxy-D-xylulose 5-phosphate reductoisomerase</fullName>
        <shortName evidence="1">DXP reductoisomerase</shortName>
        <ecNumber evidence="1">1.1.1.267</ecNumber>
    </recommendedName>
    <alternativeName>
        <fullName evidence="1">1-deoxyxylulose-5-phosphate reductoisomerase</fullName>
    </alternativeName>
    <alternativeName>
        <fullName evidence="1">2-C-methyl-D-erythritol 4-phosphate synthase</fullName>
    </alternativeName>
</protein>
<comment type="function">
    <text evidence="1">Catalyzes the NADPH-dependent rearrangement and reduction of 1-deoxy-D-xylulose-5-phosphate (DXP) to 2-C-methyl-D-erythritol 4-phosphate (MEP).</text>
</comment>
<comment type="catalytic activity">
    <reaction evidence="1">
        <text>2-C-methyl-D-erythritol 4-phosphate + NADP(+) = 1-deoxy-D-xylulose 5-phosphate + NADPH + H(+)</text>
        <dbReference type="Rhea" id="RHEA:13717"/>
        <dbReference type="ChEBI" id="CHEBI:15378"/>
        <dbReference type="ChEBI" id="CHEBI:57783"/>
        <dbReference type="ChEBI" id="CHEBI:57792"/>
        <dbReference type="ChEBI" id="CHEBI:58262"/>
        <dbReference type="ChEBI" id="CHEBI:58349"/>
        <dbReference type="EC" id="1.1.1.267"/>
    </reaction>
    <physiologicalReaction direction="right-to-left" evidence="1">
        <dbReference type="Rhea" id="RHEA:13719"/>
    </physiologicalReaction>
</comment>
<comment type="cofactor">
    <cofactor evidence="1">
        <name>Mg(2+)</name>
        <dbReference type="ChEBI" id="CHEBI:18420"/>
    </cofactor>
    <cofactor evidence="1">
        <name>Mn(2+)</name>
        <dbReference type="ChEBI" id="CHEBI:29035"/>
    </cofactor>
</comment>
<comment type="pathway">
    <text evidence="1">Isoprenoid biosynthesis; isopentenyl diphosphate biosynthesis via DXP pathway; isopentenyl diphosphate from 1-deoxy-D-xylulose 5-phosphate: step 1/6.</text>
</comment>
<comment type="similarity">
    <text evidence="1">Belongs to the DXR family.</text>
</comment>
<accession>Q39F49</accession>
<evidence type="ECO:0000255" key="1">
    <source>
        <dbReference type="HAMAP-Rule" id="MF_00183"/>
    </source>
</evidence>
<name>DXR_BURL3</name>
<reference key="1">
    <citation type="submission" date="2005-10" db="EMBL/GenBank/DDBJ databases">
        <title>Complete sequence of chromosome 1 of Burkholderia sp. 383.</title>
        <authorList>
            <consortium name="US DOE Joint Genome Institute"/>
            <person name="Copeland A."/>
            <person name="Lucas S."/>
            <person name="Lapidus A."/>
            <person name="Barry K."/>
            <person name="Detter J.C."/>
            <person name="Glavina T."/>
            <person name="Hammon N."/>
            <person name="Israni S."/>
            <person name="Pitluck S."/>
            <person name="Chain P."/>
            <person name="Malfatti S."/>
            <person name="Shin M."/>
            <person name="Vergez L."/>
            <person name="Schmutz J."/>
            <person name="Larimer F."/>
            <person name="Land M."/>
            <person name="Kyrpides N."/>
            <person name="Lykidis A."/>
            <person name="Richardson P."/>
        </authorList>
    </citation>
    <scope>NUCLEOTIDE SEQUENCE [LARGE SCALE GENOMIC DNA]</scope>
    <source>
        <strain>ATCC 17760 / DSM 23089 / LMG 22485 / NCIMB 9086 / R18194 / 383</strain>
    </source>
</reference>
<keyword id="KW-0414">Isoprene biosynthesis</keyword>
<keyword id="KW-0464">Manganese</keyword>
<keyword id="KW-0479">Metal-binding</keyword>
<keyword id="KW-0521">NADP</keyword>
<keyword id="KW-0560">Oxidoreductase</keyword>
<proteinExistence type="inferred from homology"/>